<accession>C1A617</accession>
<proteinExistence type="inferred from homology"/>
<comment type="subcellular location">
    <subcellularLocation>
        <location evidence="1">Cytoplasm</location>
    </subcellularLocation>
</comment>
<comment type="similarity">
    <text evidence="1">Belongs to the TACO1 family.</text>
</comment>
<organism>
    <name type="scientific">Gemmatimonas aurantiaca (strain DSM 14586 / JCM 11422 / NBRC 100505 / T-27)</name>
    <dbReference type="NCBI Taxonomy" id="379066"/>
    <lineage>
        <taxon>Bacteria</taxon>
        <taxon>Pseudomonadati</taxon>
        <taxon>Gemmatimonadota</taxon>
        <taxon>Gemmatimonadia</taxon>
        <taxon>Gemmatimonadales</taxon>
        <taxon>Gemmatimonadaceae</taxon>
        <taxon>Gemmatimonas</taxon>
    </lineage>
</organism>
<evidence type="ECO:0000255" key="1">
    <source>
        <dbReference type="HAMAP-Rule" id="MF_00693"/>
    </source>
</evidence>
<protein>
    <recommendedName>
        <fullName evidence="1">Probable transcriptional regulatory protein GAU_0635</fullName>
    </recommendedName>
</protein>
<name>Y635_GEMAT</name>
<dbReference type="EMBL" id="AP009153">
    <property type="protein sequence ID" value="BAH37677.1"/>
    <property type="molecule type" value="Genomic_DNA"/>
</dbReference>
<dbReference type="RefSeq" id="WP_012682124.1">
    <property type="nucleotide sequence ID" value="NC_012489.1"/>
</dbReference>
<dbReference type="SMR" id="C1A617"/>
<dbReference type="STRING" id="379066.GAU_0635"/>
<dbReference type="KEGG" id="gau:GAU_0635"/>
<dbReference type="eggNOG" id="COG0217">
    <property type="taxonomic scope" value="Bacteria"/>
</dbReference>
<dbReference type="HOGENOM" id="CLU_062974_2_2_0"/>
<dbReference type="OrthoDB" id="9781053at2"/>
<dbReference type="Proteomes" id="UP000002209">
    <property type="component" value="Chromosome"/>
</dbReference>
<dbReference type="GO" id="GO:0005829">
    <property type="term" value="C:cytosol"/>
    <property type="evidence" value="ECO:0007669"/>
    <property type="project" value="TreeGrafter"/>
</dbReference>
<dbReference type="GO" id="GO:0003677">
    <property type="term" value="F:DNA binding"/>
    <property type="evidence" value="ECO:0007669"/>
    <property type="project" value="UniProtKB-UniRule"/>
</dbReference>
<dbReference type="GO" id="GO:0006355">
    <property type="term" value="P:regulation of DNA-templated transcription"/>
    <property type="evidence" value="ECO:0007669"/>
    <property type="project" value="UniProtKB-UniRule"/>
</dbReference>
<dbReference type="FunFam" id="1.10.10.200:FF:000002">
    <property type="entry name" value="Probable transcriptional regulatory protein CLM62_37755"/>
    <property type="match status" value="1"/>
</dbReference>
<dbReference type="Gene3D" id="1.10.10.200">
    <property type="match status" value="1"/>
</dbReference>
<dbReference type="Gene3D" id="3.30.70.980">
    <property type="match status" value="2"/>
</dbReference>
<dbReference type="HAMAP" id="MF_00693">
    <property type="entry name" value="Transcrip_reg_TACO1"/>
    <property type="match status" value="1"/>
</dbReference>
<dbReference type="InterPro" id="IPR017856">
    <property type="entry name" value="Integrase-like_N"/>
</dbReference>
<dbReference type="InterPro" id="IPR048300">
    <property type="entry name" value="TACO1_YebC-like_2nd/3rd_dom"/>
</dbReference>
<dbReference type="InterPro" id="IPR049083">
    <property type="entry name" value="TACO1_YebC_N"/>
</dbReference>
<dbReference type="InterPro" id="IPR002876">
    <property type="entry name" value="Transcrip_reg_TACO1-like"/>
</dbReference>
<dbReference type="InterPro" id="IPR026564">
    <property type="entry name" value="Transcrip_reg_TACO1-like_dom3"/>
</dbReference>
<dbReference type="InterPro" id="IPR029072">
    <property type="entry name" value="YebC-like"/>
</dbReference>
<dbReference type="NCBIfam" id="NF001030">
    <property type="entry name" value="PRK00110.1"/>
    <property type="match status" value="1"/>
</dbReference>
<dbReference type="NCBIfam" id="NF009044">
    <property type="entry name" value="PRK12378.1"/>
    <property type="match status" value="1"/>
</dbReference>
<dbReference type="NCBIfam" id="TIGR01033">
    <property type="entry name" value="YebC/PmpR family DNA-binding transcriptional regulator"/>
    <property type="match status" value="1"/>
</dbReference>
<dbReference type="PANTHER" id="PTHR12532:SF6">
    <property type="entry name" value="TRANSCRIPTIONAL REGULATORY PROTEIN YEBC-RELATED"/>
    <property type="match status" value="1"/>
</dbReference>
<dbReference type="PANTHER" id="PTHR12532">
    <property type="entry name" value="TRANSLATIONAL ACTIVATOR OF CYTOCHROME C OXIDASE 1"/>
    <property type="match status" value="1"/>
</dbReference>
<dbReference type="Pfam" id="PF20772">
    <property type="entry name" value="TACO1_YebC_N"/>
    <property type="match status" value="1"/>
</dbReference>
<dbReference type="Pfam" id="PF01709">
    <property type="entry name" value="Transcrip_reg"/>
    <property type="match status" value="1"/>
</dbReference>
<dbReference type="SUPFAM" id="SSF75625">
    <property type="entry name" value="YebC-like"/>
    <property type="match status" value="1"/>
</dbReference>
<reference key="1">
    <citation type="submission" date="2006-03" db="EMBL/GenBank/DDBJ databases">
        <title>Complete genome sequence of Gemmatimonas aurantiaca T-27 that represents a novel phylum Gemmatimonadetes.</title>
        <authorList>
            <person name="Takasaki K."/>
            <person name="Ichikawa N."/>
            <person name="Miura H."/>
            <person name="Matsushita S."/>
            <person name="Watanabe Y."/>
            <person name="Oguchi A."/>
            <person name="Ankai A."/>
            <person name="Yashiro I."/>
            <person name="Takahashi M."/>
            <person name="Terui Y."/>
            <person name="Fukui S."/>
            <person name="Yokoyama H."/>
            <person name="Tanikawa S."/>
            <person name="Hanada S."/>
            <person name="Kamagata Y."/>
            <person name="Fujita N."/>
        </authorList>
    </citation>
    <scope>NUCLEOTIDE SEQUENCE [LARGE SCALE GENOMIC DNA]</scope>
    <source>
        <strain>DSM 14586 / JCM 11422 / NBRC 100505 / T-27</strain>
    </source>
</reference>
<feature type="chain" id="PRO_1000212610" description="Probable transcriptional regulatory protein GAU_0635">
    <location>
        <begin position="1"/>
        <end position="247"/>
    </location>
</feature>
<keyword id="KW-0963">Cytoplasm</keyword>
<keyword id="KW-0238">DNA-binding</keyword>
<keyword id="KW-1185">Reference proteome</keyword>
<keyword id="KW-0804">Transcription</keyword>
<keyword id="KW-0805">Transcription regulation</keyword>
<sequence>MAGHSKWKTIKRAKAATDNKRGALFTRLIREITMAAKLGGGDAGGNPRLRTAIDNAKAVSMPKDNIDRAIKKGTGELEGVDYVEVLYEAYGPGGVAIMIAAVTDNPTRTVADVRHKLSRNHGNMGTINSVAFMFDRKGQMSVAAEGVAEEALMEAALEAGADDVVNDGESFVISTDPGALHATKEGLEGRKYKVENAELAWVPKNTVKVEGENATQLLKLLEALEELDDVQKVDANFEMDDDTMADA</sequence>
<gene>
    <name type="ordered locus">GAU_0635</name>
</gene>